<gene>
    <name evidence="1" type="primary">rplK</name>
    <name type="ordered locus">SP_0630</name>
</gene>
<reference key="1">
    <citation type="journal article" date="2001" name="Science">
        <title>Complete genome sequence of a virulent isolate of Streptococcus pneumoniae.</title>
        <authorList>
            <person name="Tettelin H."/>
            <person name="Nelson K.E."/>
            <person name="Paulsen I.T."/>
            <person name="Eisen J.A."/>
            <person name="Read T.D."/>
            <person name="Peterson S.N."/>
            <person name="Heidelberg J.F."/>
            <person name="DeBoy R.T."/>
            <person name="Haft D.H."/>
            <person name="Dodson R.J."/>
            <person name="Durkin A.S."/>
            <person name="Gwinn M.L."/>
            <person name="Kolonay J.F."/>
            <person name="Nelson W.C."/>
            <person name="Peterson J.D."/>
            <person name="Umayam L.A."/>
            <person name="White O."/>
            <person name="Salzberg S.L."/>
            <person name="Lewis M.R."/>
            <person name="Radune D."/>
            <person name="Holtzapple E.K."/>
            <person name="Khouri H.M."/>
            <person name="Wolf A.M."/>
            <person name="Utterback T.R."/>
            <person name="Hansen C.L."/>
            <person name="McDonald L.A."/>
            <person name="Feldblyum T.V."/>
            <person name="Angiuoli S.V."/>
            <person name="Dickinson T."/>
            <person name="Hickey E.K."/>
            <person name="Holt I.E."/>
            <person name="Loftus B.J."/>
            <person name="Yang F."/>
            <person name="Smith H.O."/>
            <person name="Venter J.C."/>
            <person name="Dougherty B.A."/>
            <person name="Morrison D.A."/>
            <person name="Hollingshead S.K."/>
            <person name="Fraser C.M."/>
        </authorList>
    </citation>
    <scope>NUCLEOTIDE SEQUENCE [LARGE SCALE GENOMIC DNA]</scope>
    <source>
        <strain>ATCC BAA-334 / TIGR4</strain>
    </source>
</reference>
<sequence>MAKKVEKLVKLQIPAGKATPAPPVGPALGQAGINIMGFTKEFNARTADQAGMIIPVVISVYEDKSFTFVTKTPPAAVLLKKAAGVEKGSGTPNKTKVATVTRAQVQEIAETKMPDLNAANVESAMRMIEGTARSMGFTVVD</sequence>
<feature type="chain" id="PRO_0000104383" description="Large ribosomal subunit protein uL11">
    <location>
        <begin position="1"/>
        <end position="141"/>
    </location>
</feature>
<name>RL11_STRPN</name>
<protein>
    <recommendedName>
        <fullName evidence="1">Large ribosomal subunit protein uL11</fullName>
    </recommendedName>
    <alternativeName>
        <fullName evidence="2">50S ribosomal protein L11</fullName>
    </alternativeName>
</protein>
<accession>Q97RZ6</accession>
<proteinExistence type="inferred from homology"/>
<evidence type="ECO:0000255" key="1">
    <source>
        <dbReference type="HAMAP-Rule" id="MF_00736"/>
    </source>
</evidence>
<evidence type="ECO:0000305" key="2"/>
<dbReference type="EMBL" id="AE005672">
    <property type="protein sequence ID" value="AAK74781.1"/>
    <property type="molecule type" value="Genomic_DNA"/>
</dbReference>
<dbReference type="PIR" id="D95073">
    <property type="entry name" value="D95073"/>
</dbReference>
<dbReference type="RefSeq" id="WP_001085809.1">
    <property type="nucleotide sequence ID" value="NZ_CP155539.1"/>
</dbReference>
<dbReference type="SMR" id="Q97RZ6"/>
<dbReference type="PaxDb" id="170187-SP_0630"/>
<dbReference type="EnsemblBacteria" id="AAK74781">
    <property type="protein sequence ID" value="AAK74781"/>
    <property type="gene ID" value="SP_0630"/>
</dbReference>
<dbReference type="GeneID" id="93739230"/>
<dbReference type="KEGG" id="spn:SP_0630"/>
<dbReference type="eggNOG" id="COG0080">
    <property type="taxonomic scope" value="Bacteria"/>
</dbReference>
<dbReference type="PhylomeDB" id="Q97RZ6"/>
<dbReference type="BioCyc" id="SPNE170187:G1FZB-648-MONOMER"/>
<dbReference type="Proteomes" id="UP000000585">
    <property type="component" value="Chromosome"/>
</dbReference>
<dbReference type="GO" id="GO:0022625">
    <property type="term" value="C:cytosolic large ribosomal subunit"/>
    <property type="evidence" value="ECO:0007669"/>
    <property type="project" value="TreeGrafter"/>
</dbReference>
<dbReference type="GO" id="GO:0070180">
    <property type="term" value="F:large ribosomal subunit rRNA binding"/>
    <property type="evidence" value="ECO:0007669"/>
    <property type="project" value="UniProtKB-UniRule"/>
</dbReference>
<dbReference type="GO" id="GO:0003735">
    <property type="term" value="F:structural constituent of ribosome"/>
    <property type="evidence" value="ECO:0007669"/>
    <property type="project" value="InterPro"/>
</dbReference>
<dbReference type="GO" id="GO:0006412">
    <property type="term" value="P:translation"/>
    <property type="evidence" value="ECO:0007669"/>
    <property type="project" value="UniProtKB-UniRule"/>
</dbReference>
<dbReference type="CDD" id="cd00349">
    <property type="entry name" value="Ribosomal_L11"/>
    <property type="match status" value="1"/>
</dbReference>
<dbReference type="FunFam" id="1.10.10.250:FF:000001">
    <property type="entry name" value="50S ribosomal protein L11"/>
    <property type="match status" value="1"/>
</dbReference>
<dbReference type="FunFam" id="3.30.1550.10:FF:000001">
    <property type="entry name" value="50S ribosomal protein L11"/>
    <property type="match status" value="1"/>
</dbReference>
<dbReference type="Gene3D" id="1.10.10.250">
    <property type="entry name" value="Ribosomal protein L11, C-terminal domain"/>
    <property type="match status" value="1"/>
</dbReference>
<dbReference type="Gene3D" id="3.30.1550.10">
    <property type="entry name" value="Ribosomal protein L11/L12, N-terminal domain"/>
    <property type="match status" value="1"/>
</dbReference>
<dbReference type="HAMAP" id="MF_00736">
    <property type="entry name" value="Ribosomal_uL11"/>
    <property type="match status" value="1"/>
</dbReference>
<dbReference type="InterPro" id="IPR000911">
    <property type="entry name" value="Ribosomal_uL11"/>
</dbReference>
<dbReference type="InterPro" id="IPR006519">
    <property type="entry name" value="Ribosomal_uL11_bac-typ"/>
</dbReference>
<dbReference type="InterPro" id="IPR020783">
    <property type="entry name" value="Ribosomal_uL11_C"/>
</dbReference>
<dbReference type="InterPro" id="IPR036769">
    <property type="entry name" value="Ribosomal_uL11_C_sf"/>
</dbReference>
<dbReference type="InterPro" id="IPR020785">
    <property type="entry name" value="Ribosomal_uL11_CS"/>
</dbReference>
<dbReference type="InterPro" id="IPR020784">
    <property type="entry name" value="Ribosomal_uL11_N"/>
</dbReference>
<dbReference type="InterPro" id="IPR036796">
    <property type="entry name" value="Ribosomal_uL11_N_sf"/>
</dbReference>
<dbReference type="NCBIfam" id="TIGR01632">
    <property type="entry name" value="L11_bact"/>
    <property type="match status" value="1"/>
</dbReference>
<dbReference type="PANTHER" id="PTHR11661">
    <property type="entry name" value="60S RIBOSOMAL PROTEIN L12"/>
    <property type="match status" value="1"/>
</dbReference>
<dbReference type="PANTHER" id="PTHR11661:SF1">
    <property type="entry name" value="LARGE RIBOSOMAL SUBUNIT PROTEIN UL11M"/>
    <property type="match status" value="1"/>
</dbReference>
<dbReference type="Pfam" id="PF00298">
    <property type="entry name" value="Ribosomal_L11"/>
    <property type="match status" value="1"/>
</dbReference>
<dbReference type="Pfam" id="PF03946">
    <property type="entry name" value="Ribosomal_L11_N"/>
    <property type="match status" value="1"/>
</dbReference>
<dbReference type="SMART" id="SM00649">
    <property type="entry name" value="RL11"/>
    <property type="match status" value="1"/>
</dbReference>
<dbReference type="SUPFAM" id="SSF54747">
    <property type="entry name" value="Ribosomal L11/L12e N-terminal domain"/>
    <property type="match status" value="1"/>
</dbReference>
<dbReference type="SUPFAM" id="SSF46906">
    <property type="entry name" value="Ribosomal protein L11, C-terminal domain"/>
    <property type="match status" value="1"/>
</dbReference>
<dbReference type="PROSITE" id="PS00359">
    <property type="entry name" value="RIBOSOMAL_L11"/>
    <property type="match status" value="1"/>
</dbReference>
<keyword id="KW-0488">Methylation</keyword>
<keyword id="KW-1185">Reference proteome</keyword>
<keyword id="KW-0687">Ribonucleoprotein</keyword>
<keyword id="KW-0689">Ribosomal protein</keyword>
<keyword id="KW-0694">RNA-binding</keyword>
<keyword id="KW-0699">rRNA-binding</keyword>
<organism>
    <name type="scientific">Streptococcus pneumoniae serotype 4 (strain ATCC BAA-334 / TIGR4)</name>
    <dbReference type="NCBI Taxonomy" id="170187"/>
    <lineage>
        <taxon>Bacteria</taxon>
        <taxon>Bacillati</taxon>
        <taxon>Bacillota</taxon>
        <taxon>Bacilli</taxon>
        <taxon>Lactobacillales</taxon>
        <taxon>Streptococcaceae</taxon>
        <taxon>Streptococcus</taxon>
    </lineage>
</organism>
<comment type="function">
    <text evidence="1">Forms part of the ribosomal stalk which helps the ribosome interact with GTP-bound translation factors.</text>
</comment>
<comment type="subunit">
    <text evidence="1">Part of the ribosomal stalk of the 50S ribosomal subunit. Interacts with L10 and the large rRNA to form the base of the stalk. L10 forms an elongated spine to which L12 dimers bind in a sequential fashion forming a multimeric L10(L12)X complex.</text>
</comment>
<comment type="PTM">
    <text evidence="1">One or more lysine residues are methylated.</text>
</comment>
<comment type="similarity">
    <text evidence="1">Belongs to the universal ribosomal protein uL11 family.</text>
</comment>